<dbReference type="EMBL" id="U82228">
    <property type="protein sequence ID" value="AAC60330.1"/>
    <property type="molecule type" value="Genomic_DNA"/>
</dbReference>
<dbReference type="PIR" id="E58893">
    <property type="entry name" value="E58893"/>
</dbReference>
<dbReference type="RefSeq" id="NP_008341.1">
    <property type="nucleotide sequence ID" value="NC_001804.1"/>
</dbReference>
<dbReference type="SMR" id="O03176"/>
<dbReference type="FunCoup" id="O03176">
    <property type="interactions" value="294"/>
</dbReference>
<dbReference type="STRING" id="7897.ENSLACP00000021817"/>
<dbReference type="Ensembl" id="ENSLACT00000024874.1">
    <property type="protein sequence ID" value="ENSLACP00000021817.1"/>
    <property type="gene ID" value="ENSLACG00000022090.1"/>
</dbReference>
<dbReference type="GeneID" id="808082"/>
<dbReference type="KEGG" id="lcm:808082"/>
<dbReference type="CTD" id="4519"/>
<dbReference type="eggNOG" id="KOG4663">
    <property type="taxonomic scope" value="Eukaryota"/>
</dbReference>
<dbReference type="GeneTree" id="ENSGT00390000017948"/>
<dbReference type="HOGENOM" id="CLU_031114_3_0_1"/>
<dbReference type="InParanoid" id="O03176"/>
<dbReference type="OMA" id="NISAWWN"/>
<dbReference type="OrthoDB" id="244at2759"/>
<dbReference type="TreeFam" id="TF353088"/>
<dbReference type="Proteomes" id="UP000008672">
    <property type="component" value="Mitochondrion"/>
</dbReference>
<dbReference type="Bgee" id="ENSLACG00000022090">
    <property type="expression patterns" value="Expressed in pelvic fin and 6 other cell types or tissues"/>
</dbReference>
<dbReference type="GO" id="GO:0005743">
    <property type="term" value="C:mitochondrial inner membrane"/>
    <property type="evidence" value="ECO:0007669"/>
    <property type="project" value="UniProtKB-SubCell"/>
</dbReference>
<dbReference type="GO" id="GO:0045275">
    <property type="term" value="C:respiratory chain complex III"/>
    <property type="evidence" value="ECO:0007669"/>
    <property type="project" value="InterPro"/>
</dbReference>
<dbReference type="GO" id="GO:0046872">
    <property type="term" value="F:metal ion binding"/>
    <property type="evidence" value="ECO:0007669"/>
    <property type="project" value="UniProtKB-KW"/>
</dbReference>
<dbReference type="GO" id="GO:0008121">
    <property type="term" value="F:ubiquinol-cytochrome-c reductase activity"/>
    <property type="evidence" value="ECO:0007669"/>
    <property type="project" value="InterPro"/>
</dbReference>
<dbReference type="GO" id="GO:0006122">
    <property type="term" value="P:mitochondrial electron transport, ubiquinol to cytochrome c"/>
    <property type="evidence" value="ECO:0007669"/>
    <property type="project" value="TreeGrafter"/>
</dbReference>
<dbReference type="CDD" id="cd00290">
    <property type="entry name" value="cytochrome_b_C"/>
    <property type="match status" value="1"/>
</dbReference>
<dbReference type="CDD" id="cd00284">
    <property type="entry name" value="Cytochrome_b_N"/>
    <property type="match status" value="1"/>
</dbReference>
<dbReference type="FunFam" id="1.20.810.10:FF:000002">
    <property type="entry name" value="Cytochrome b"/>
    <property type="match status" value="1"/>
</dbReference>
<dbReference type="Gene3D" id="1.20.810.10">
    <property type="entry name" value="Cytochrome Bc1 Complex, Chain C"/>
    <property type="match status" value="1"/>
</dbReference>
<dbReference type="InterPro" id="IPR005798">
    <property type="entry name" value="Cyt_b/b6_C"/>
</dbReference>
<dbReference type="InterPro" id="IPR036150">
    <property type="entry name" value="Cyt_b/b6_C_sf"/>
</dbReference>
<dbReference type="InterPro" id="IPR005797">
    <property type="entry name" value="Cyt_b/b6_N"/>
</dbReference>
<dbReference type="InterPro" id="IPR027387">
    <property type="entry name" value="Cytb/b6-like_sf"/>
</dbReference>
<dbReference type="InterPro" id="IPR030689">
    <property type="entry name" value="Cytochrome_b"/>
</dbReference>
<dbReference type="InterPro" id="IPR048260">
    <property type="entry name" value="Cytochrome_b_C_euk/bac"/>
</dbReference>
<dbReference type="InterPro" id="IPR048259">
    <property type="entry name" value="Cytochrome_b_N_euk/bac"/>
</dbReference>
<dbReference type="InterPro" id="IPR016174">
    <property type="entry name" value="Di-haem_cyt_TM"/>
</dbReference>
<dbReference type="PANTHER" id="PTHR19271">
    <property type="entry name" value="CYTOCHROME B"/>
    <property type="match status" value="1"/>
</dbReference>
<dbReference type="PANTHER" id="PTHR19271:SF16">
    <property type="entry name" value="CYTOCHROME B"/>
    <property type="match status" value="1"/>
</dbReference>
<dbReference type="Pfam" id="PF00032">
    <property type="entry name" value="Cytochrom_B_C"/>
    <property type="match status" value="1"/>
</dbReference>
<dbReference type="Pfam" id="PF00033">
    <property type="entry name" value="Cytochrome_B"/>
    <property type="match status" value="1"/>
</dbReference>
<dbReference type="PIRSF" id="PIRSF038885">
    <property type="entry name" value="COB"/>
    <property type="match status" value="1"/>
</dbReference>
<dbReference type="SUPFAM" id="SSF81648">
    <property type="entry name" value="a domain/subunit of cytochrome bc1 complex (Ubiquinol-cytochrome c reductase)"/>
    <property type="match status" value="1"/>
</dbReference>
<dbReference type="SUPFAM" id="SSF81342">
    <property type="entry name" value="Transmembrane di-heme cytochromes"/>
    <property type="match status" value="1"/>
</dbReference>
<dbReference type="PROSITE" id="PS51003">
    <property type="entry name" value="CYTB_CTER"/>
    <property type="match status" value="1"/>
</dbReference>
<dbReference type="PROSITE" id="PS51002">
    <property type="entry name" value="CYTB_NTER"/>
    <property type="match status" value="1"/>
</dbReference>
<protein>
    <recommendedName>
        <fullName>Cytochrome b</fullName>
    </recommendedName>
    <alternativeName>
        <fullName>Complex III subunit 3</fullName>
    </alternativeName>
    <alternativeName>
        <fullName>Complex III subunit III</fullName>
    </alternativeName>
    <alternativeName>
        <fullName>Cytochrome b-c1 complex subunit 3</fullName>
    </alternativeName>
    <alternativeName>
        <fullName>Ubiquinol-cytochrome-c reductase complex cytochrome b subunit</fullName>
    </alternativeName>
</protein>
<gene>
    <name type="primary">mt-cyb</name>
    <name type="synonym">cob</name>
    <name type="synonym">cytb</name>
    <name type="synonym">mtcyb</name>
</gene>
<evidence type="ECO:0000250" key="1"/>
<evidence type="ECO:0000250" key="2">
    <source>
        <dbReference type="UniProtKB" id="P00157"/>
    </source>
</evidence>
<evidence type="ECO:0000255" key="3">
    <source>
        <dbReference type="PROSITE-ProRule" id="PRU00967"/>
    </source>
</evidence>
<evidence type="ECO:0000255" key="4">
    <source>
        <dbReference type="PROSITE-ProRule" id="PRU00968"/>
    </source>
</evidence>
<feature type="chain" id="PRO_0000061092" description="Cytochrome b">
    <location>
        <begin position="1"/>
        <end position="380"/>
    </location>
</feature>
<feature type="transmembrane region" description="Helical" evidence="2">
    <location>
        <begin position="33"/>
        <end position="53"/>
    </location>
</feature>
<feature type="transmembrane region" description="Helical" evidence="2">
    <location>
        <begin position="77"/>
        <end position="98"/>
    </location>
</feature>
<feature type="transmembrane region" description="Helical" evidence="2">
    <location>
        <begin position="113"/>
        <end position="133"/>
    </location>
</feature>
<feature type="transmembrane region" description="Helical" evidence="2">
    <location>
        <begin position="178"/>
        <end position="198"/>
    </location>
</feature>
<feature type="transmembrane region" description="Helical" evidence="2">
    <location>
        <begin position="226"/>
        <end position="246"/>
    </location>
</feature>
<feature type="transmembrane region" description="Helical" evidence="2">
    <location>
        <begin position="288"/>
        <end position="308"/>
    </location>
</feature>
<feature type="transmembrane region" description="Helical" evidence="2">
    <location>
        <begin position="320"/>
        <end position="340"/>
    </location>
</feature>
<feature type="transmembrane region" description="Helical" evidence="2">
    <location>
        <begin position="347"/>
        <end position="367"/>
    </location>
</feature>
<feature type="binding site" description="axial binding residue" evidence="2">
    <location>
        <position position="83"/>
    </location>
    <ligand>
        <name>heme b</name>
        <dbReference type="ChEBI" id="CHEBI:60344"/>
        <label>b562</label>
    </ligand>
    <ligandPart>
        <name>Fe</name>
        <dbReference type="ChEBI" id="CHEBI:18248"/>
    </ligandPart>
</feature>
<feature type="binding site" description="axial binding residue" evidence="2">
    <location>
        <position position="97"/>
    </location>
    <ligand>
        <name>heme b</name>
        <dbReference type="ChEBI" id="CHEBI:60344"/>
        <label>b566</label>
    </ligand>
    <ligandPart>
        <name>Fe</name>
        <dbReference type="ChEBI" id="CHEBI:18248"/>
    </ligandPart>
</feature>
<feature type="binding site" description="axial binding residue" evidence="2">
    <location>
        <position position="182"/>
    </location>
    <ligand>
        <name>heme b</name>
        <dbReference type="ChEBI" id="CHEBI:60344"/>
        <label>b562</label>
    </ligand>
    <ligandPart>
        <name>Fe</name>
        <dbReference type="ChEBI" id="CHEBI:18248"/>
    </ligandPart>
</feature>
<feature type="binding site" description="axial binding residue" evidence="2">
    <location>
        <position position="196"/>
    </location>
    <ligand>
        <name>heme b</name>
        <dbReference type="ChEBI" id="CHEBI:60344"/>
        <label>b566</label>
    </ligand>
    <ligandPart>
        <name>Fe</name>
        <dbReference type="ChEBI" id="CHEBI:18248"/>
    </ligandPart>
</feature>
<feature type="binding site" evidence="2">
    <location>
        <position position="201"/>
    </location>
    <ligand>
        <name>a ubiquinone</name>
        <dbReference type="ChEBI" id="CHEBI:16389"/>
    </ligand>
</feature>
<geneLocation type="mitochondrion"/>
<keyword id="KW-0249">Electron transport</keyword>
<keyword id="KW-0349">Heme</keyword>
<keyword id="KW-0408">Iron</keyword>
<keyword id="KW-0472">Membrane</keyword>
<keyword id="KW-0479">Metal-binding</keyword>
<keyword id="KW-0496">Mitochondrion</keyword>
<keyword id="KW-0999">Mitochondrion inner membrane</keyword>
<keyword id="KW-1185">Reference proteome</keyword>
<keyword id="KW-0679">Respiratory chain</keyword>
<keyword id="KW-0812">Transmembrane</keyword>
<keyword id="KW-1133">Transmembrane helix</keyword>
<keyword id="KW-0813">Transport</keyword>
<keyword id="KW-0830">Ubiquinone</keyword>
<name>CYB_LATCH</name>
<sequence>MTNIRKTHPLIKIINETIIDLPTPSNISIWWNFGSLLGICLITQIVTGLFLAMHYTADITTAFSSVAHICRDVNYGWLIRSTHANGASLFFICIYLHVARGLYYGSYLQKETWNIGVILLMLVMITAFVGYVLPWGQMSFWGATVITNLLSAVPYIGDTLVQWIWGGFSVDNATLTRFFAFHFLLPFVISGASIIHLLFLHETGSNNPTGLNSDADKVTFHPYFSYKDMLGFLITLTTLAFLTLFTPNLLGDPENFTPANPLTTPPHIKPEWYFLFAYAILRSIPNKLGGVLALVSSILVLLLVPILHTSKQRGNTFRPITQMLFWALVADMLILTWIGGQPVEYPFMTIGQIASITYFSLFLILIPMTGWLENKAMNWN</sequence>
<reference key="1">
    <citation type="journal article" date="1997" name="Genetics">
        <title>The complete DNA sequence of the mitochondrial genome of a 'living fossil,' the coelacanth (Latimeria chalumnae).</title>
        <authorList>
            <person name="Zardoya R."/>
            <person name="Meyer A."/>
        </authorList>
    </citation>
    <scope>NUCLEOTIDE SEQUENCE [LARGE SCALE GENOMIC DNA]</scope>
</reference>
<comment type="function">
    <text evidence="2">Component of the ubiquinol-cytochrome c reductase complex (complex III or cytochrome b-c1 complex) that is part of the mitochondrial respiratory chain. The b-c1 complex mediates electron transfer from ubiquinol to cytochrome c. Contributes to the generation of a proton gradient across the mitochondrial membrane that is then used for ATP synthesis.</text>
</comment>
<comment type="cofactor">
    <cofactor evidence="2">
        <name>heme b</name>
        <dbReference type="ChEBI" id="CHEBI:60344"/>
    </cofactor>
    <text evidence="2">Binds 2 heme b groups non-covalently.</text>
</comment>
<comment type="subunit">
    <text evidence="2">The cytochrome bc1 complex contains 3 respiratory subunits (MT-CYB, CYC1 and UQCRFS1), 2 core proteins (UQCRC1 and UQCRC2) and probably 6 low-molecular weight proteins.</text>
</comment>
<comment type="subcellular location">
    <subcellularLocation>
        <location evidence="2">Mitochondrion inner membrane</location>
        <topology evidence="2">Multi-pass membrane protein</topology>
    </subcellularLocation>
</comment>
<comment type="miscellaneous">
    <text evidence="1">Heme 1 (or BL or b562) is low-potential and absorbs at about 562 nm, and heme 2 (or BH or b566) is high-potential and absorbs at about 566 nm.</text>
</comment>
<comment type="similarity">
    <text evidence="3 4">Belongs to the cytochrome b family.</text>
</comment>
<comment type="caution">
    <text evidence="2">The full-length protein contains only eight transmembrane helices, not nine as predicted by bioinformatics tools.</text>
</comment>
<accession>O03176</accession>
<proteinExistence type="inferred from homology"/>
<organism>
    <name type="scientific">Latimeria chalumnae</name>
    <name type="common">Coelacanth</name>
    <dbReference type="NCBI Taxonomy" id="7897"/>
    <lineage>
        <taxon>Eukaryota</taxon>
        <taxon>Metazoa</taxon>
        <taxon>Chordata</taxon>
        <taxon>Craniata</taxon>
        <taxon>Vertebrata</taxon>
        <taxon>Euteleostomi</taxon>
        <taxon>Coelacanthiformes</taxon>
        <taxon>Coelacanthidae</taxon>
        <taxon>Latimeria</taxon>
    </lineage>
</organism>